<evidence type="ECO:0000255" key="1">
    <source>
        <dbReference type="HAMAP-Rule" id="MF_01363"/>
    </source>
</evidence>
<evidence type="ECO:0000305" key="2"/>
<keyword id="KW-0687">Ribonucleoprotein</keyword>
<keyword id="KW-0689">Ribosomal protein</keyword>
<keyword id="KW-0694">RNA-binding</keyword>
<keyword id="KW-0699">rRNA-binding</keyword>
<gene>
    <name evidence="1" type="primary">rplU</name>
    <name type="ordered locus">CF0810</name>
</gene>
<name>RL21_CHLFF</name>
<organism>
    <name type="scientific">Chlamydia felis (strain Fe/C-56)</name>
    <name type="common">Chlamydophila felis</name>
    <dbReference type="NCBI Taxonomy" id="264202"/>
    <lineage>
        <taxon>Bacteria</taxon>
        <taxon>Pseudomonadati</taxon>
        <taxon>Chlamydiota</taxon>
        <taxon>Chlamydiia</taxon>
        <taxon>Chlamydiales</taxon>
        <taxon>Chlamydiaceae</taxon>
        <taxon>Chlamydia/Chlamydophila group</taxon>
        <taxon>Chlamydia</taxon>
    </lineage>
</organism>
<protein>
    <recommendedName>
        <fullName evidence="1">Large ribosomal subunit protein bL21</fullName>
    </recommendedName>
    <alternativeName>
        <fullName evidence="2">50S ribosomal protein L21</fullName>
    </alternativeName>
</protein>
<accession>Q253F6</accession>
<dbReference type="EMBL" id="AP006861">
    <property type="protein sequence ID" value="BAE81582.1"/>
    <property type="molecule type" value="Genomic_DNA"/>
</dbReference>
<dbReference type="RefSeq" id="WP_011458359.1">
    <property type="nucleotide sequence ID" value="NC_007899.1"/>
</dbReference>
<dbReference type="SMR" id="Q253F6"/>
<dbReference type="STRING" id="264202.CF0810"/>
<dbReference type="KEGG" id="cfe:CF0810"/>
<dbReference type="eggNOG" id="COG0261">
    <property type="taxonomic scope" value="Bacteria"/>
</dbReference>
<dbReference type="HOGENOM" id="CLU_061463_3_2_0"/>
<dbReference type="OrthoDB" id="9813334at2"/>
<dbReference type="Proteomes" id="UP000001260">
    <property type="component" value="Chromosome"/>
</dbReference>
<dbReference type="GO" id="GO:0005737">
    <property type="term" value="C:cytoplasm"/>
    <property type="evidence" value="ECO:0007669"/>
    <property type="project" value="UniProtKB-ARBA"/>
</dbReference>
<dbReference type="GO" id="GO:1990904">
    <property type="term" value="C:ribonucleoprotein complex"/>
    <property type="evidence" value="ECO:0007669"/>
    <property type="project" value="UniProtKB-KW"/>
</dbReference>
<dbReference type="GO" id="GO:0005840">
    <property type="term" value="C:ribosome"/>
    <property type="evidence" value="ECO:0007669"/>
    <property type="project" value="UniProtKB-KW"/>
</dbReference>
<dbReference type="GO" id="GO:0019843">
    <property type="term" value="F:rRNA binding"/>
    <property type="evidence" value="ECO:0007669"/>
    <property type="project" value="UniProtKB-UniRule"/>
</dbReference>
<dbReference type="GO" id="GO:0003735">
    <property type="term" value="F:structural constituent of ribosome"/>
    <property type="evidence" value="ECO:0007669"/>
    <property type="project" value="InterPro"/>
</dbReference>
<dbReference type="GO" id="GO:0006412">
    <property type="term" value="P:translation"/>
    <property type="evidence" value="ECO:0007669"/>
    <property type="project" value="UniProtKB-UniRule"/>
</dbReference>
<dbReference type="HAMAP" id="MF_01363">
    <property type="entry name" value="Ribosomal_bL21"/>
    <property type="match status" value="1"/>
</dbReference>
<dbReference type="InterPro" id="IPR028909">
    <property type="entry name" value="bL21-like"/>
</dbReference>
<dbReference type="InterPro" id="IPR036164">
    <property type="entry name" value="bL21-like_sf"/>
</dbReference>
<dbReference type="InterPro" id="IPR001787">
    <property type="entry name" value="Ribosomal_bL21"/>
</dbReference>
<dbReference type="InterPro" id="IPR018258">
    <property type="entry name" value="Ribosomal_bL21_CS"/>
</dbReference>
<dbReference type="NCBIfam" id="TIGR00061">
    <property type="entry name" value="L21"/>
    <property type="match status" value="1"/>
</dbReference>
<dbReference type="PANTHER" id="PTHR21349">
    <property type="entry name" value="50S RIBOSOMAL PROTEIN L21"/>
    <property type="match status" value="1"/>
</dbReference>
<dbReference type="PANTHER" id="PTHR21349:SF0">
    <property type="entry name" value="LARGE RIBOSOMAL SUBUNIT PROTEIN BL21M"/>
    <property type="match status" value="1"/>
</dbReference>
<dbReference type="Pfam" id="PF00829">
    <property type="entry name" value="Ribosomal_L21p"/>
    <property type="match status" value="1"/>
</dbReference>
<dbReference type="SUPFAM" id="SSF141091">
    <property type="entry name" value="L21p-like"/>
    <property type="match status" value="1"/>
</dbReference>
<dbReference type="PROSITE" id="PS01169">
    <property type="entry name" value="RIBOSOMAL_L21"/>
    <property type="match status" value="1"/>
</dbReference>
<comment type="function">
    <text evidence="1">This protein binds to 23S rRNA in the presence of protein L20.</text>
</comment>
<comment type="subunit">
    <text evidence="1">Part of the 50S ribosomal subunit. Contacts protein L20.</text>
</comment>
<comment type="similarity">
    <text evidence="1">Belongs to the bacterial ribosomal protein bL21 family.</text>
</comment>
<sequence>MKPYAIIQTGNKQYQVSEGDVIDVELLDGVSEGQEVVFEQVLFTFDGSKASLGTPTVSNAVVKGEMLSRVRGEKVIAYKYKRRKNYHRKTGHRQNYLRVKISNLVM</sequence>
<feature type="chain" id="PRO_0000270651" description="Large ribosomal subunit protein bL21">
    <location>
        <begin position="1"/>
        <end position="106"/>
    </location>
</feature>
<proteinExistence type="inferred from homology"/>
<reference key="1">
    <citation type="journal article" date="2006" name="DNA Res.">
        <title>Genome sequence of the cat pathogen, Chlamydophila felis.</title>
        <authorList>
            <person name="Azuma Y."/>
            <person name="Hirakawa H."/>
            <person name="Yamashita A."/>
            <person name="Cai Y."/>
            <person name="Rahman M.A."/>
            <person name="Suzuki H."/>
            <person name="Mitaku S."/>
            <person name="Toh H."/>
            <person name="Goto S."/>
            <person name="Murakami T."/>
            <person name="Sugi K."/>
            <person name="Hayashi H."/>
            <person name="Fukushi H."/>
            <person name="Hattori M."/>
            <person name="Kuhara S."/>
            <person name="Shirai M."/>
        </authorList>
    </citation>
    <scope>NUCLEOTIDE SEQUENCE [LARGE SCALE GENOMIC DNA]</scope>
    <source>
        <strain>Fe/C-56</strain>
    </source>
</reference>